<protein>
    <recommendedName>
        <fullName evidence="1">Large ribosomal subunit protein bL28</fullName>
    </recommendedName>
    <alternativeName>
        <fullName evidence="2">50S ribosomal protein L28</fullName>
    </alternativeName>
</protein>
<dbReference type="EMBL" id="CP000387">
    <property type="protein sequence ID" value="ABN45352.1"/>
    <property type="molecule type" value="Genomic_DNA"/>
</dbReference>
<dbReference type="RefSeq" id="WP_001140948.1">
    <property type="nucleotide sequence ID" value="NZ_CAXTYR010000002.1"/>
</dbReference>
<dbReference type="RefSeq" id="YP_001035902.1">
    <property type="nucleotide sequence ID" value="NC_009009.1"/>
</dbReference>
<dbReference type="SMR" id="A3CQ97"/>
<dbReference type="STRING" id="388919.SSA_1980"/>
<dbReference type="GeneID" id="93921138"/>
<dbReference type="KEGG" id="ssa:SSA_1980"/>
<dbReference type="PATRIC" id="fig|388919.9.peg.1876"/>
<dbReference type="eggNOG" id="COG0227">
    <property type="taxonomic scope" value="Bacteria"/>
</dbReference>
<dbReference type="HOGENOM" id="CLU_064548_7_1_9"/>
<dbReference type="OrthoDB" id="9805609at2"/>
<dbReference type="PRO" id="PR:A3CQ97"/>
<dbReference type="Proteomes" id="UP000002148">
    <property type="component" value="Chromosome"/>
</dbReference>
<dbReference type="GO" id="GO:1990904">
    <property type="term" value="C:ribonucleoprotein complex"/>
    <property type="evidence" value="ECO:0007669"/>
    <property type="project" value="UniProtKB-KW"/>
</dbReference>
<dbReference type="GO" id="GO:0005840">
    <property type="term" value="C:ribosome"/>
    <property type="evidence" value="ECO:0007669"/>
    <property type="project" value="UniProtKB-KW"/>
</dbReference>
<dbReference type="GO" id="GO:0003735">
    <property type="term" value="F:structural constituent of ribosome"/>
    <property type="evidence" value="ECO:0007669"/>
    <property type="project" value="InterPro"/>
</dbReference>
<dbReference type="GO" id="GO:0006412">
    <property type="term" value="P:translation"/>
    <property type="evidence" value="ECO:0007669"/>
    <property type="project" value="UniProtKB-UniRule"/>
</dbReference>
<dbReference type="Gene3D" id="2.30.170.40">
    <property type="entry name" value="Ribosomal protein L28/L24"/>
    <property type="match status" value="1"/>
</dbReference>
<dbReference type="HAMAP" id="MF_00373">
    <property type="entry name" value="Ribosomal_bL28"/>
    <property type="match status" value="1"/>
</dbReference>
<dbReference type="InterPro" id="IPR050096">
    <property type="entry name" value="Bacterial_rp_bL28"/>
</dbReference>
<dbReference type="InterPro" id="IPR026569">
    <property type="entry name" value="Ribosomal_bL28"/>
</dbReference>
<dbReference type="InterPro" id="IPR034704">
    <property type="entry name" value="Ribosomal_bL28/bL31-like_sf"/>
</dbReference>
<dbReference type="InterPro" id="IPR001383">
    <property type="entry name" value="Ribosomal_bL28_bact-type"/>
</dbReference>
<dbReference type="InterPro" id="IPR037147">
    <property type="entry name" value="Ribosomal_bL28_sf"/>
</dbReference>
<dbReference type="NCBIfam" id="TIGR00009">
    <property type="entry name" value="L28"/>
    <property type="match status" value="1"/>
</dbReference>
<dbReference type="PANTHER" id="PTHR39080">
    <property type="entry name" value="50S RIBOSOMAL PROTEIN L28"/>
    <property type="match status" value="1"/>
</dbReference>
<dbReference type="PANTHER" id="PTHR39080:SF1">
    <property type="entry name" value="LARGE RIBOSOMAL SUBUNIT PROTEIN BL28A"/>
    <property type="match status" value="1"/>
</dbReference>
<dbReference type="Pfam" id="PF00830">
    <property type="entry name" value="Ribosomal_L28"/>
    <property type="match status" value="1"/>
</dbReference>
<dbReference type="SUPFAM" id="SSF143800">
    <property type="entry name" value="L28p-like"/>
    <property type="match status" value="1"/>
</dbReference>
<reference key="1">
    <citation type="journal article" date="2007" name="J. Bacteriol.">
        <title>Genome of the opportunistic pathogen Streptococcus sanguinis.</title>
        <authorList>
            <person name="Xu P."/>
            <person name="Alves J.M."/>
            <person name="Kitten T."/>
            <person name="Brown A."/>
            <person name="Chen Z."/>
            <person name="Ozaki L.S."/>
            <person name="Manque P."/>
            <person name="Ge X."/>
            <person name="Serrano M.G."/>
            <person name="Puiu D."/>
            <person name="Hendricks S."/>
            <person name="Wang Y."/>
            <person name="Chaplin M.D."/>
            <person name="Akan D."/>
            <person name="Paik S."/>
            <person name="Peterson D.L."/>
            <person name="Macrina F.L."/>
            <person name="Buck G.A."/>
        </authorList>
    </citation>
    <scope>NUCLEOTIDE SEQUENCE [LARGE SCALE GENOMIC DNA]</scope>
    <source>
        <strain>SK36</strain>
    </source>
</reference>
<sequence length="62" mass="6884">MAKVCYFTGRKTVSGNNRSHAMNQTKRAVKPNLQKVTVLIDGKPKKVWASARALKSGKVERV</sequence>
<name>RL28_STRSV</name>
<keyword id="KW-1185">Reference proteome</keyword>
<keyword id="KW-0687">Ribonucleoprotein</keyword>
<keyword id="KW-0689">Ribosomal protein</keyword>
<comment type="similarity">
    <text evidence="1">Belongs to the bacterial ribosomal protein bL28 family.</text>
</comment>
<evidence type="ECO:0000255" key="1">
    <source>
        <dbReference type="HAMAP-Rule" id="MF_00373"/>
    </source>
</evidence>
<evidence type="ECO:0000305" key="2"/>
<feature type="chain" id="PRO_1000007377" description="Large ribosomal subunit protein bL28">
    <location>
        <begin position="1"/>
        <end position="62"/>
    </location>
</feature>
<organism>
    <name type="scientific">Streptococcus sanguinis (strain SK36)</name>
    <dbReference type="NCBI Taxonomy" id="388919"/>
    <lineage>
        <taxon>Bacteria</taxon>
        <taxon>Bacillati</taxon>
        <taxon>Bacillota</taxon>
        <taxon>Bacilli</taxon>
        <taxon>Lactobacillales</taxon>
        <taxon>Streptococcaceae</taxon>
        <taxon>Streptococcus</taxon>
    </lineage>
</organism>
<gene>
    <name evidence="1" type="primary">rpmB</name>
    <name type="ordered locus">SSA_1980</name>
</gene>
<proteinExistence type="inferred from homology"/>
<accession>A3CQ97</accession>